<reference key="1">
    <citation type="journal article" date="2004" name="Science">
        <title>A predator unmasked: life cycle of Bdellovibrio bacteriovorus from a genomic perspective.</title>
        <authorList>
            <person name="Rendulic S."/>
            <person name="Jagtap P."/>
            <person name="Rosinus A."/>
            <person name="Eppinger M."/>
            <person name="Baar C."/>
            <person name="Lanz C."/>
            <person name="Keller H."/>
            <person name="Lambert C."/>
            <person name="Evans K.J."/>
            <person name="Goesmann A."/>
            <person name="Meyer F."/>
            <person name="Sockett R.E."/>
            <person name="Schuster S.C."/>
        </authorList>
    </citation>
    <scope>NUCLEOTIDE SEQUENCE [LARGE SCALE GENOMIC DNA]</scope>
    <source>
        <strain>ATCC 15356 / DSM 50701 / NCIMB 9529 / HD100</strain>
    </source>
</reference>
<keyword id="KW-0963">Cytoplasm</keyword>
<keyword id="KW-0664">Pyridoxine biosynthesis</keyword>
<keyword id="KW-1185">Reference proteome</keyword>
<keyword id="KW-0808">Transferase</keyword>
<organism>
    <name type="scientific">Bdellovibrio bacteriovorus (strain ATCC 15356 / DSM 50701 / NCIMB 9529 / HD100)</name>
    <dbReference type="NCBI Taxonomy" id="264462"/>
    <lineage>
        <taxon>Bacteria</taxon>
        <taxon>Pseudomonadati</taxon>
        <taxon>Bdellovibrionota</taxon>
        <taxon>Bdellovibrionia</taxon>
        <taxon>Bdellovibrionales</taxon>
        <taxon>Pseudobdellovibrionaceae</taxon>
        <taxon>Bdellovibrio</taxon>
    </lineage>
</organism>
<comment type="function">
    <text evidence="1">Catalyzes the complicated ring closure reaction between the two acyclic compounds 1-deoxy-D-xylulose-5-phosphate (DXP) and 3-amino-2-oxopropyl phosphate (1-amino-acetone-3-phosphate or AAP) to form pyridoxine 5'-phosphate (PNP) and inorganic phosphate.</text>
</comment>
<comment type="catalytic activity">
    <reaction evidence="1">
        <text>3-amino-2-oxopropyl phosphate + 1-deoxy-D-xylulose 5-phosphate = pyridoxine 5'-phosphate + phosphate + 2 H2O + H(+)</text>
        <dbReference type="Rhea" id="RHEA:15265"/>
        <dbReference type="ChEBI" id="CHEBI:15377"/>
        <dbReference type="ChEBI" id="CHEBI:15378"/>
        <dbReference type="ChEBI" id="CHEBI:43474"/>
        <dbReference type="ChEBI" id="CHEBI:57279"/>
        <dbReference type="ChEBI" id="CHEBI:57792"/>
        <dbReference type="ChEBI" id="CHEBI:58589"/>
        <dbReference type="EC" id="2.6.99.2"/>
    </reaction>
</comment>
<comment type="pathway">
    <text evidence="1">Cofactor biosynthesis; pyridoxine 5'-phosphate biosynthesis; pyridoxine 5'-phosphate from D-erythrose 4-phosphate: step 5/5.</text>
</comment>
<comment type="subunit">
    <text evidence="1">Homooctamer; tetramer of dimers.</text>
</comment>
<comment type="subcellular location">
    <subcellularLocation>
        <location evidence="1">Cytoplasm</location>
    </subcellularLocation>
</comment>
<comment type="similarity">
    <text evidence="1">Belongs to the PNP synthase family.</text>
</comment>
<evidence type="ECO:0000255" key="1">
    <source>
        <dbReference type="HAMAP-Rule" id="MF_00279"/>
    </source>
</evidence>
<dbReference type="EC" id="2.6.99.2" evidence="1"/>
<dbReference type="EMBL" id="BX842651">
    <property type="protein sequence ID" value="CAE79783.1"/>
    <property type="molecule type" value="Genomic_DNA"/>
</dbReference>
<dbReference type="RefSeq" id="WP_011164385.1">
    <property type="nucleotide sequence ID" value="NC_005363.1"/>
</dbReference>
<dbReference type="SMR" id="Q3V7R4"/>
<dbReference type="STRING" id="264462.Bd1932"/>
<dbReference type="GeneID" id="93012887"/>
<dbReference type="KEGG" id="bba:Bd1932"/>
<dbReference type="eggNOG" id="COG0854">
    <property type="taxonomic scope" value="Bacteria"/>
</dbReference>
<dbReference type="HOGENOM" id="CLU_074563_0_0_7"/>
<dbReference type="UniPathway" id="UPA00244">
    <property type="reaction ID" value="UER00313"/>
</dbReference>
<dbReference type="Proteomes" id="UP000008080">
    <property type="component" value="Chromosome"/>
</dbReference>
<dbReference type="GO" id="GO:0005829">
    <property type="term" value="C:cytosol"/>
    <property type="evidence" value="ECO:0007669"/>
    <property type="project" value="TreeGrafter"/>
</dbReference>
<dbReference type="GO" id="GO:0033856">
    <property type="term" value="F:pyridoxine 5'-phosphate synthase activity"/>
    <property type="evidence" value="ECO:0007669"/>
    <property type="project" value="UniProtKB-EC"/>
</dbReference>
<dbReference type="GO" id="GO:0008615">
    <property type="term" value="P:pyridoxine biosynthetic process"/>
    <property type="evidence" value="ECO:0007669"/>
    <property type="project" value="UniProtKB-UniRule"/>
</dbReference>
<dbReference type="CDD" id="cd00003">
    <property type="entry name" value="PNPsynthase"/>
    <property type="match status" value="1"/>
</dbReference>
<dbReference type="Gene3D" id="3.20.20.70">
    <property type="entry name" value="Aldolase class I"/>
    <property type="match status" value="1"/>
</dbReference>
<dbReference type="HAMAP" id="MF_00279">
    <property type="entry name" value="PdxJ"/>
    <property type="match status" value="1"/>
</dbReference>
<dbReference type="InterPro" id="IPR013785">
    <property type="entry name" value="Aldolase_TIM"/>
</dbReference>
<dbReference type="InterPro" id="IPR004569">
    <property type="entry name" value="PyrdxlP_synth_PdxJ"/>
</dbReference>
<dbReference type="InterPro" id="IPR036130">
    <property type="entry name" value="Pyridoxine-5'_phos_synth"/>
</dbReference>
<dbReference type="NCBIfam" id="TIGR00559">
    <property type="entry name" value="pdxJ"/>
    <property type="match status" value="1"/>
</dbReference>
<dbReference type="NCBIfam" id="NF003625">
    <property type="entry name" value="PRK05265.1-3"/>
    <property type="match status" value="1"/>
</dbReference>
<dbReference type="NCBIfam" id="NF003627">
    <property type="entry name" value="PRK05265.1-5"/>
    <property type="match status" value="1"/>
</dbReference>
<dbReference type="PANTHER" id="PTHR30456">
    <property type="entry name" value="PYRIDOXINE 5'-PHOSPHATE SYNTHASE"/>
    <property type="match status" value="1"/>
</dbReference>
<dbReference type="PANTHER" id="PTHR30456:SF0">
    <property type="entry name" value="PYRIDOXINE 5'-PHOSPHATE SYNTHASE"/>
    <property type="match status" value="1"/>
</dbReference>
<dbReference type="Pfam" id="PF03740">
    <property type="entry name" value="PdxJ"/>
    <property type="match status" value="1"/>
</dbReference>
<dbReference type="SUPFAM" id="SSF63892">
    <property type="entry name" value="Pyridoxine 5'-phosphate synthase"/>
    <property type="match status" value="1"/>
</dbReference>
<name>PDXJ_BDEBA</name>
<sequence length="241" mass="27463">MKHKIRLGVNVDHVATLRQVRGGTTAYPNLLDMVKKSVKGGAEQITIHLREDRRHIQLEDLKVLSKHCSVPLNLEMAATSQMVTYAKKYRPDWVCFVPEKRAELTTEGGLDVKKGFKKMFPMVEKLQRIGIEISMFIEPSLEQVEASYEIGADAVEFHTGKWVMLKGARKAAEWKRLCDAAEWAHYLGLNVHAGHGLDYEHSKLINKLPHLQEVNIGHSLVCYALEHGMEESVRKMRKILK</sequence>
<accession>Q3V7R4</accession>
<proteinExistence type="inferred from homology"/>
<feature type="chain" id="PRO_0000231784" description="Pyridoxine 5'-phosphate synthase">
    <location>
        <begin position="1"/>
        <end position="241"/>
    </location>
</feature>
<feature type="active site" description="Proton acceptor" evidence="1">
    <location>
        <position position="48"/>
    </location>
</feature>
<feature type="active site" description="Proton acceptor" evidence="1">
    <location>
        <position position="75"/>
    </location>
</feature>
<feature type="active site" description="Proton donor" evidence="1">
    <location>
        <position position="195"/>
    </location>
</feature>
<feature type="binding site" evidence="1">
    <location>
        <position position="10"/>
    </location>
    <ligand>
        <name>3-amino-2-oxopropyl phosphate</name>
        <dbReference type="ChEBI" id="CHEBI:57279"/>
    </ligand>
</feature>
<feature type="binding site" evidence="1">
    <location>
        <begin position="12"/>
        <end position="13"/>
    </location>
    <ligand>
        <name>1-deoxy-D-xylulose 5-phosphate</name>
        <dbReference type="ChEBI" id="CHEBI:57792"/>
    </ligand>
</feature>
<feature type="binding site" evidence="1">
    <location>
        <position position="21"/>
    </location>
    <ligand>
        <name>3-amino-2-oxopropyl phosphate</name>
        <dbReference type="ChEBI" id="CHEBI:57279"/>
    </ligand>
</feature>
<feature type="binding site" evidence="1">
    <location>
        <position position="50"/>
    </location>
    <ligand>
        <name>1-deoxy-D-xylulose 5-phosphate</name>
        <dbReference type="ChEBI" id="CHEBI:57792"/>
    </ligand>
</feature>
<feature type="binding site" evidence="1">
    <location>
        <position position="55"/>
    </location>
    <ligand>
        <name>1-deoxy-D-xylulose 5-phosphate</name>
        <dbReference type="ChEBI" id="CHEBI:57792"/>
    </ligand>
</feature>
<feature type="binding site" evidence="1">
    <location>
        <position position="105"/>
    </location>
    <ligand>
        <name>1-deoxy-D-xylulose 5-phosphate</name>
        <dbReference type="ChEBI" id="CHEBI:57792"/>
    </ligand>
</feature>
<feature type="binding site" evidence="1">
    <location>
        <position position="196"/>
    </location>
    <ligand>
        <name>3-amino-2-oxopropyl phosphate</name>
        <dbReference type="ChEBI" id="CHEBI:57279"/>
    </ligand>
</feature>
<feature type="binding site" evidence="1">
    <location>
        <begin position="217"/>
        <end position="218"/>
    </location>
    <ligand>
        <name>3-amino-2-oxopropyl phosphate</name>
        <dbReference type="ChEBI" id="CHEBI:57279"/>
    </ligand>
</feature>
<feature type="site" description="Transition state stabilizer" evidence="1">
    <location>
        <position position="156"/>
    </location>
</feature>
<protein>
    <recommendedName>
        <fullName evidence="1">Pyridoxine 5'-phosphate synthase</fullName>
        <shortName evidence="1">PNP synthase</shortName>
        <ecNumber evidence="1">2.6.99.2</ecNumber>
    </recommendedName>
</protein>
<gene>
    <name evidence="1" type="primary">pdxJ</name>
    <name type="ordered locus">Bd1932</name>
</gene>